<accession>Q16799</accession>
<accession>Q16800</accession>
<accession>Q16801</accession>
<accession>Q5BKZ4</accession>
<accession>Q9BQ59</accession>
<dbReference type="EMBL" id="L10333">
    <property type="protein sequence ID" value="AAA59950.1"/>
    <property type="molecule type" value="mRNA"/>
</dbReference>
<dbReference type="EMBL" id="L10334">
    <property type="protein sequence ID" value="AAA59951.1"/>
    <property type="molecule type" value="mRNA"/>
</dbReference>
<dbReference type="EMBL" id="L10335">
    <property type="protein sequence ID" value="AAA59952.1"/>
    <property type="molecule type" value="mRNA"/>
</dbReference>
<dbReference type="EMBL" id="CH471061">
    <property type="protein sequence ID" value="EAW80762.1"/>
    <property type="molecule type" value="Genomic_DNA"/>
</dbReference>
<dbReference type="EMBL" id="BC090862">
    <property type="protein sequence ID" value="AAH90862.1"/>
    <property type="molecule type" value="mRNA"/>
</dbReference>
<dbReference type="EMBL" id="BC000314">
    <property type="protein sequence ID" value="AAH00314.2"/>
    <property type="molecule type" value="mRNA"/>
</dbReference>
<dbReference type="EMBL" id="BC003003">
    <property type="protein sequence ID" value="AAH03003.2"/>
    <property type="molecule type" value="mRNA"/>
</dbReference>
<dbReference type="CCDS" id="CCDS9740.1">
    <molecule id="Q16799-1"/>
</dbReference>
<dbReference type="CCDS" id="CCDS9741.1">
    <molecule id="Q16799-3"/>
</dbReference>
<dbReference type="PIR" id="A46583">
    <property type="entry name" value="A46583"/>
</dbReference>
<dbReference type="PIR" id="I60904">
    <property type="entry name" value="I60904"/>
</dbReference>
<dbReference type="RefSeq" id="NP_066959.1">
    <molecule id="Q16799-1"/>
    <property type="nucleotide sequence ID" value="NM_021136.3"/>
</dbReference>
<dbReference type="RefSeq" id="NP_996734.1">
    <molecule id="Q16799-3"/>
    <property type="nucleotide sequence ID" value="NM_206852.3"/>
</dbReference>
<dbReference type="SMR" id="Q16799"/>
<dbReference type="BioGRID" id="112165">
    <property type="interactions" value="123"/>
</dbReference>
<dbReference type="FunCoup" id="Q16799">
    <property type="interactions" value="408"/>
</dbReference>
<dbReference type="IntAct" id="Q16799">
    <property type="interactions" value="71"/>
</dbReference>
<dbReference type="MINT" id="Q16799"/>
<dbReference type="STRING" id="9606.ENSP00000267484"/>
<dbReference type="TCDB" id="8.A.102.1.9">
    <property type="family name" value="the reticulon (reticulon) family"/>
</dbReference>
<dbReference type="GlyCosmos" id="Q16799">
    <property type="glycosylation" value="1 site, 1 glycan"/>
</dbReference>
<dbReference type="GlyGen" id="Q16799">
    <property type="glycosylation" value="4 sites, 1 O-linked glycan (2 sites)"/>
</dbReference>
<dbReference type="iPTMnet" id="Q16799"/>
<dbReference type="PhosphoSitePlus" id="Q16799"/>
<dbReference type="SwissPalm" id="Q16799"/>
<dbReference type="BioMuta" id="RTN1"/>
<dbReference type="DMDM" id="12643733"/>
<dbReference type="jPOST" id="Q16799"/>
<dbReference type="MassIVE" id="Q16799"/>
<dbReference type="PaxDb" id="9606-ENSP00000267484"/>
<dbReference type="PeptideAtlas" id="Q16799"/>
<dbReference type="ProteomicsDB" id="61074">
    <molecule id="Q16799-1"/>
</dbReference>
<dbReference type="ProteomicsDB" id="61075">
    <molecule id="Q16799-2"/>
</dbReference>
<dbReference type="ProteomicsDB" id="61076">
    <molecule id="Q16799-3"/>
</dbReference>
<dbReference type="Pumba" id="Q16799"/>
<dbReference type="Antibodypedia" id="3447">
    <property type="antibodies" value="538 antibodies from 29 providers"/>
</dbReference>
<dbReference type="DNASU" id="6252"/>
<dbReference type="Ensembl" id="ENST00000267484.10">
    <molecule id="Q16799-1"/>
    <property type="protein sequence ID" value="ENSP00000267484.5"/>
    <property type="gene ID" value="ENSG00000139970.18"/>
</dbReference>
<dbReference type="Ensembl" id="ENST00000342503.8">
    <molecule id="Q16799-3"/>
    <property type="protein sequence ID" value="ENSP00000340716.4"/>
    <property type="gene ID" value="ENSG00000139970.18"/>
</dbReference>
<dbReference type="GeneID" id="6252"/>
<dbReference type="KEGG" id="hsa:6252"/>
<dbReference type="MANE-Select" id="ENST00000267484.10">
    <property type="protein sequence ID" value="ENSP00000267484.5"/>
    <property type="RefSeq nucleotide sequence ID" value="NM_021136.3"/>
    <property type="RefSeq protein sequence ID" value="NP_066959.1"/>
</dbReference>
<dbReference type="UCSC" id="uc001xek.3">
    <molecule id="Q16799-1"/>
    <property type="organism name" value="human"/>
</dbReference>
<dbReference type="AGR" id="HGNC:10467"/>
<dbReference type="CTD" id="6252"/>
<dbReference type="DisGeNET" id="6252"/>
<dbReference type="GeneCards" id="RTN1"/>
<dbReference type="HGNC" id="HGNC:10467">
    <property type="gene designation" value="RTN1"/>
</dbReference>
<dbReference type="HPA" id="ENSG00000139970">
    <property type="expression patterns" value="Tissue enriched (brain)"/>
</dbReference>
<dbReference type="MIM" id="600865">
    <property type="type" value="gene"/>
</dbReference>
<dbReference type="neXtProt" id="NX_Q16799"/>
<dbReference type="OpenTargets" id="ENSG00000139970"/>
<dbReference type="PharmGKB" id="PA34880"/>
<dbReference type="VEuPathDB" id="HostDB:ENSG00000139970"/>
<dbReference type="eggNOG" id="KOG1792">
    <property type="taxonomic scope" value="Eukaryota"/>
</dbReference>
<dbReference type="GeneTree" id="ENSGT00940000155077"/>
<dbReference type="InParanoid" id="Q16799"/>
<dbReference type="OMA" id="CLWSCWK"/>
<dbReference type="OrthoDB" id="567788at2759"/>
<dbReference type="PAN-GO" id="Q16799">
    <property type="GO annotations" value="1 GO annotation based on evolutionary models"/>
</dbReference>
<dbReference type="PhylomeDB" id="Q16799"/>
<dbReference type="TreeFam" id="TF105431"/>
<dbReference type="PathwayCommons" id="Q16799"/>
<dbReference type="SignaLink" id="Q16799"/>
<dbReference type="BioGRID-ORCS" id="6252">
    <property type="hits" value="10 hits in 1148 CRISPR screens"/>
</dbReference>
<dbReference type="CD-CODE" id="FB4E32DD">
    <property type="entry name" value="Presynaptic clusters and postsynaptic densities"/>
</dbReference>
<dbReference type="ChiTaRS" id="RTN1">
    <property type="organism name" value="human"/>
</dbReference>
<dbReference type="GeneWiki" id="RTN1"/>
<dbReference type="GenomeRNAi" id="6252"/>
<dbReference type="Pharos" id="Q16799">
    <property type="development level" value="Tbio"/>
</dbReference>
<dbReference type="PRO" id="PR:Q16799"/>
<dbReference type="Proteomes" id="UP000005640">
    <property type="component" value="Chromosome 14"/>
</dbReference>
<dbReference type="RNAct" id="Q16799">
    <property type="molecule type" value="protein"/>
</dbReference>
<dbReference type="Bgee" id="ENSG00000139970">
    <property type="expression patterns" value="Expressed in Brodmann (1909) area 23 and 181 other cell types or tissues"/>
</dbReference>
<dbReference type="ExpressionAtlas" id="Q16799">
    <property type="expression patterns" value="baseline and differential"/>
</dbReference>
<dbReference type="GO" id="GO:0030425">
    <property type="term" value="C:dendrite"/>
    <property type="evidence" value="ECO:0007669"/>
    <property type="project" value="Ensembl"/>
</dbReference>
<dbReference type="GO" id="GO:0005783">
    <property type="term" value="C:endoplasmic reticulum"/>
    <property type="evidence" value="ECO:0000314"/>
    <property type="project" value="HPA"/>
</dbReference>
<dbReference type="GO" id="GO:0005789">
    <property type="term" value="C:endoplasmic reticulum membrane"/>
    <property type="evidence" value="ECO:0000314"/>
    <property type="project" value="UniProtKB"/>
</dbReference>
<dbReference type="GO" id="GO:0000139">
    <property type="term" value="C:Golgi membrane"/>
    <property type="evidence" value="ECO:0000314"/>
    <property type="project" value="UniProtKB"/>
</dbReference>
<dbReference type="GO" id="GO:0043005">
    <property type="term" value="C:neuron projection"/>
    <property type="evidence" value="ECO:0000318"/>
    <property type="project" value="GO_Central"/>
</dbReference>
<dbReference type="GO" id="GO:0043025">
    <property type="term" value="C:neuronal cell body"/>
    <property type="evidence" value="ECO:0007669"/>
    <property type="project" value="Ensembl"/>
</dbReference>
<dbReference type="GO" id="GO:0016604">
    <property type="term" value="C:nuclear body"/>
    <property type="evidence" value="ECO:0000314"/>
    <property type="project" value="HPA"/>
</dbReference>
<dbReference type="GO" id="GO:0014069">
    <property type="term" value="C:postsynaptic density"/>
    <property type="evidence" value="ECO:0000318"/>
    <property type="project" value="GO_Central"/>
</dbReference>
<dbReference type="GO" id="GO:0007420">
    <property type="term" value="P:brain development"/>
    <property type="evidence" value="ECO:0000318"/>
    <property type="project" value="GO_Central"/>
</dbReference>
<dbReference type="GO" id="GO:0071787">
    <property type="term" value="P:endoplasmic reticulum tubular network formation"/>
    <property type="evidence" value="ECO:0000318"/>
    <property type="project" value="GO_Central"/>
</dbReference>
<dbReference type="GO" id="GO:1902430">
    <property type="term" value="P:negative regulation of amyloid-beta formation"/>
    <property type="evidence" value="ECO:0000314"/>
    <property type="project" value="UniProtKB"/>
</dbReference>
<dbReference type="GO" id="GO:0030182">
    <property type="term" value="P:neuron differentiation"/>
    <property type="evidence" value="ECO:0000270"/>
    <property type="project" value="UniProtKB"/>
</dbReference>
<dbReference type="FunFam" id="1.20.5.2480:FF:000001">
    <property type="entry name" value="Reticulon"/>
    <property type="match status" value="1"/>
</dbReference>
<dbReference type="Gene3D" id="1.20.5.2480">
    <property type="match status" value="1"/>
</dbReference>
<dbReference type="InterPro" id="IPR003388">
    <property type="entry name" value="Reticulon"/>
</dbReference>
<dbReference type="InterPro" id="IPR046964">
    <property type="entry name" value="RTN1-4"/>
</dbReference>
<dbReference type="PANTHER" id="PTHR45799:SF5">
    <property type="entry name" value="RETICULON-1"/>
    <property type="match status" value="1"/>
</dbReference>
<dbReference type="PANTHER" id="PTHR45799">
    <property type="entry name" value="RETICULON-LIKE PROTEIN"/>
    <property type="match status" value="1"/>
</dbReference>
<dbReference type="Pfam" id="PF02453">
    <property type="entry name" value="Reticulon"/>
    <property type="match status" value="1"/>
</dbReference>
<dbReference type="PROSITE" id="PS50845">
    <property type="entry name" value="RETICULON"/>
    <property type="match status" value="1"/>
</dbReference>
<comment type="function">
    <text evidence="7">Inhibits amyloid precursor protein processing, probably by blocking BACE1 activity.</text>
</comment>
<comment type="subunit">
    <text evidence="7 8">Interacts with NDRG1 (PubMed:15922294). Interacts with BACE1 (PubMed:15286784).</text>
</comment>
<comment type="subunit">
    <molecule>Isoform RTN1-A</molecule>
    <text evidence="9">Interacts with TMEM33 (PubMed:25612671).</text>
</comment>
<comment type="subunit">
    <molecule>Isoform RTN1-C</molecule>
    <text evidence="6">Interacts with UGCG; regulates the ceramide glucosyltransferase activity of UGCG (PubMed:12873973).</text>
</comment>
<comment type="interaction">
    <interactant intactId="EBI-10180131">
        <id>Q16799-3</id>
    </interactant>
    <interactant intactId="EBI-466029">
        <id>P42858</id>
        <label>HTT</label>
    </interactant>
    <organismsDiffer>false</organismsDiffer>
    <experiments>9</experiments>
</comment>
<comment type="interaction">
    <interactant intactId="EBI-10180131">
        <id>Q16799-3</id>
    </interactant>
    <interactant intactId="EBI-1044104">
        <id>P55145</id>
        <label>MANF</label>
    </interactant>
    <organismsDiffer>false</organismsDiffer>
    <experiments>4</experiments>
</comment>
<comment type="interaction">
    <interactant intactId="EBI-10180131">
        <id>Q16799-3</id>
    </interactant>
    <interactant intactId="EBI-727004">
        <id>O00560</id>
        <label>SDCBP</label>
    </interactant>
    <organismsDiffer>false</organismsDiffer>
    <experiments>3</experiments>
</comment>
<comment type="subcellular location">
    <subcellularLocation>
        <location evidence="6">Endoplasmic reticulum membrane</location>
        <topology evidence="3">Multi-pass membrane protein</topology>
    </subcellularLocation>
    <subcellularLocation>
        <location evidence="6">Golgi apparatus membrane</location>
        <topology evidence="3">Multi-pass membrane protein</topology>
    </subcellularLocation>
</comment>
<comment type="alternative products">
    <event type="alternative splicing"/>
    <isoform>
        <id>Q16799-1</id>
        <name>RTN1-A</name>
        <name>NSP-A</name>
        <sequence type="displayed"/>
    </isoform>
    <isoform>
        <id>Q16799-2</id>
        <name>RTN1-B</name>
        <name>NSP-B</name>
        <sequence type="described" ref="VSP_005644"/>
    </isoform>
    <isoform>
        <id>Q16799-3</id>
        <name>RTN1-C</name>
        <name>NSP-C</name>
        <sequence type="described" ref="VSP_005645 VSP_005646"/>
    </isoform>
</comment>
<comment type="tissue specificity">
    <text evidence="10">Expressed in neural and neuroendocrine tissues and cell cultures derived therefrom. Expression of isoform RTN1-C is strongly correlated with neuronal differentiation.</text>
</comment>
<comment type="PTM">
    <text>Isoforms RTN1-A and RTN1-B are phosphorylated.</text>
</comment>
<reference key="1">
    <citation type="journal article" date="1993" name="J. Biol. Chem.">
        <title>Cloning and expression of alternative transcripts of a novel neuroendocrine-specific gene and identification of its 135-kDa translational product.</title>
        <authorList>
            <person name="Roebroek A.J.M."/>
            <person name="Van de Velde H.J.K."/>
            <person name="Van Bokhoven A."/>
            <person name="Broers J.L.V."/>
            <person name="Ramaekers F.C.S."/>
            <person name="Van de Ven W.J.M."/>
        </authorList>
    </citation>
    <scope>NUCLEOTIDE SEQUENCE [MRNA] (ISOFORMS RTN1-A; RTN1-B AND RTN1-C)</scope>
    <source>
        <tissue>Lung carcinoma</tissue>
    </source>
</reference>
<reference key="2">
    <citation type="submission" date="2005-09" db="EMBL/GenBank/DDBJ databases">
        <authorList>
            <person name="Mural R.J."/>
            <person name="Istrail S."/>
            <person name="Sutton G.G."/>
            <person name="Florea L."/>
            <person name="Halpern A.L."/>
            <person name="Mobarry C.M."/>
            <person name="Lippert R."/>
            <person name="Walenz B."/>
            <person name="Shatkay H."/>
            <person name="Dew I."/>
            <person name="Miller J.R."/>
            <person name="Flanigan M.J."/>
            <person name="Edwards N.J."/>
            <person name="Bolanos R."/>
            <person name="Fasulo D."/>
            <person name="Halldorsson B.V."/>
            <person name="Hannenhalli S."/>
            <person name="Turner R."/>
            <person name="Yooseph S."/>
            <person name="Lu F."/>
            <person name="Nusskern D.R."/>
            <person name="Shue B.C."/>
            <person name="Zheng X.H."/>
            <person name="Zhong F."/>
            <person name="Delcher A.L."/>
            <person name="Huson D.H."/>
            <person name="Kravitz S.A."/>
            <person name="Mouchard L."/>
            <person name="Reinert K."/>
            <person name="Remington K.A."/>
            <person name="Clark A.G."/>
            <person name="Waterman M.S."/>
            <person name="Eichler E.E."/>
            <person name="Adams M.D."/>
            <person name="Hunkapiller M.W."/>
            <person name="Myers E.W."/>
            <person name="Venter J.C."/>
        </authorList>
    </citation>
    <scope>NUCLEOTIDE SEQUENCE [LARGE SCALE GENOMIC DNA]</scope>
</reference>
<reference key="3">
    <citation type="journal article" date="2004" name="Genome Res.">
        <title>The status, quality, and expansion of the NIH full-length cDNA project: the Mammalian Gene Collection (MGC).</title>
        <authorList>
            <consortium name="The MGC Project Team"/>
        </authorList>
    </citation>
    <scope>NUCLEOTIDE SEQUENCE [LARGE SCALE MRNA] (ISOFORMS RTN1-A AND RTN1-C)</scope>
    <source>
        <tissue>Lung</tissue>
        <tissue>PNS</tissue>
    </source>
</reference>
<reference key="4">
    <citation type="journal article" date="1996" name="Genomics">
        <title>Genomic organization of the human NSP gene, prototype of a novel gene family encoding reticulons.</title>
        <authorList>
            <person name="Roebroek A.J.M."/>
            <person name="Ayoubi T.A.Y."/>
            <person name="Van de Velde H.J.K."/>
            <person name="Schoenmakers E.F.P.M."/>
            <person name="Pauli I.G.L."/>
            <person name="Van de Ven W.J.M."/>
        </authorList>
    </citation>
    <scope>ALTERNATIVE SPLICING</scope>
</reference>
<reference key="5">
    <citation type="journal article" date="1998" name="Cell Tissue Res.">
        <title>Neuronal differentiation is accompanied by NSP-C expression.</title>
        <authorList>
            <person name="Hens J."/>
            <person name="Nuydens R."/>
            <person name="Geerts H."/>
            <person name="Senden N.H."/>
            <person name="Van de Ven W.J.M."/>
            <person name="Roebroek A.J."/>
            <person name="van de Velde H.J.K."/>
            <person name="Ramaekers F.C."/>
            <person name="Broers J.L."/>
        </authorList>
    </citation>
    <scope>TISSUE SPECIFICITY</scope>
</reference>
<reference key="6">
    <citation type="journal article" date="2003" name="Cancer Res.">
        <title>Glucosylceramide synthase and its functional interaction with RTN-1C regulate chemotherapeutic-induced apoptosis in neuroepithelioma cells.</title>
        <authorList>
            <person name="Di Sano F."/>
            <person name="Fazi B."/>
            <person name="Citro G."/>
            <person name="Lovat P.E."/>
            <person name="Cesareni G."/>
            <person name="Piacentini M."/>
        </authorList>
    </citation>
    <scope>INTERACTION WITH UGCG</scope>
    <scope>SUBCELLULAR LOCATION</scope>
</reference>
<reference key="7">
    <citation type="journal article" date="2004" name="Nat. Med.">
        <title>Reticulon family members modulate BACE1 activity and amyloid-beta peptide generation.</title>
        <authorList>
            <person name="He W."/>
            <person name="Lu Y."/>
            <person name="Qahwash I."/>
            <person name="Hu X.-Y."/>
            <person name="Chang A."/>
            <person name="Yan R."/>
        </authorList>
    </citation>
    <scope>FUNCTION</scope>
    <scope>INTERACTION WITH BACE1</scope>
</reference>
<reference key="8">
    <citation type="journal article" date="2005" name="Biochem. Biophys. Res. Commun.">
        <title>NDRG1 interacts with APO A-I and A-II and is a functional candidate for the HDL-C QTL on 8q24.</title>
        <authorList>
            <person name="Hunter M."/>
            <person name="Angelicheva D."/>
            <person name="Tournev I."/>
            <person name="Ingley E."/>
            <person name="Chan D.C."/>
            <person name="Watts G.F."/>
            <person name="Kremensky I."/>
            <person name="Kalaydjieva L."/>
        </authorList>
    </citation>
    <scope>INTERACTION WITH NDRG1</scope>
</reference>
<reference key="9">
    <citation type="journal article" date="2008" name="J. Proteome Res.">
        <title>Phosphoproteome of resting human platelets.</title>
        <authorList>
            <person name="Zahedi R.P."/>
            <person name="Lewandrowski U."/>
            <person name="Wiesner J."/>
            <person name="Wortelkamp S."/>
            <person name="Moebius J."/>
            <person name="Schuetz C."/>
            <person name="Walter U."/>
            <person name="Gambaryan S."/>
            <person name="Sickmann A."/>
        </authorList>
    </citation>
    <scope>PHOSPHORYLATION [LARGE SCALE ANALYSIS] AT SER-487</scope>
    <scope>IDENTIFICATION BY MASS SPECTROMETRY [LARGE SCALE ANALYSIS]</scope>
    <source>
        <tissue>Platelet</tissue>
    </source>
</reference>
<reference key="10">
    <citation type="journal article" date="2014" name="J. Proteomics">
        <title>An enzyme assisted RP-RPLC approach for in-depth analysis of human liver phosphoproteome.</title>
        <authorList>
            <person name="Bian Y."/>
            <person name="Song C."/>
            <person name="Cheng K."/>
            <person name="Dong M."/>
            <person name="Wang F."/>
            <person name="Huang J."/>
            <person name="Sun D."/>
            <person name="Wang L."/>
            <person name="Ye M."/>
            <person name="Zou H."/>
        </authorList>
    </citation>
    <scope>PHOSPHORYLATION [LARGE SCALE ANALYSIS] AT SER-487</scope>
    <scope>IDENTIFICATION BY MASS SPECTROMETRY [LARGE SCALE ANALYSIS]</scope>
    <source>
        <tissue>Liver</tissue>
    </source>
</reference>
<reference key="11">
    <citation type="journal article" date="2014" name="Kobe J. Med. Sci.">
        <title>Identification and characterization of TMEM33 as a reticulon-binding protein.</title>
        <authorList>
            <person name="Urade T."/>
            <person name="Yamamoto Y."/>
            <person name="Zhang X."/>
            <person name="Ku Y."/>
            <person name="Sakisaka T."/>
        </authorList>
    </citation>
    <scope>INTERACTION WITH TMEM33</scope>
</reference>
<gene>
    <name type="primary">RTN1</name>
    <name type="synonym">NSP</name>
</gene>
<name>RTN1_HUMAN</name>
<organism>
    <name type="scientific">Homo sapiens</name>
    <name type="common">Human</name>
    <dbReference type="NCBI Taxonomy" id="9606"/>
    <lineage>
        <taxon>Eukaryota</taxon>
        <taxon>Metazoa</taxon>
        <taxon>Chordata</taxon>
        <taxon>Craniata</taxon>
        <taxon>Vertebrata</taxon>
        <taxon>Euteleostomi</taxon>
        <taxon>Mammalia</taxon>
        <taxon>Eutheria</taxon>
        <taxon>Euarchontoglires</taxon>
        <taxon>Primates</taxon>
        <taxon>Haplorrhini</taxon>
        <taxon>Catarrhini</taxon>
        <taxon>Hominidae</taxon>
        <taxon>Homo</taxon>
    </lineage>
</organism>
<keyword id="KW-0025">Alternative splicing</keyword>
<keyword id="KW-0256">Endoplasmic reticulum</keyword>
<keyword id="KW-0333">Golgi apparatus</keyword>
<keyword id="KW-0472">Membrane</keyword>
<keyword id="KW-0597">Phosphoprotein</keyword>
<keyword id="KW-1267">Proteomics identification</keyword>
<keyword id="KW-1185">Reference proteome</keyword>
<keyword id="KW-0812">Transmembrane</keyword>
<keyword id="KW-1133">Transmembrane helix</keyword>
<proteinExistence type="evidence at protein level"/>
<sequence length="776" mass="83618">MAAPGDPQDELLPLAGPGSQWLRHRGEGENEAVTPKGATPAPQAGEPSPGLGARAREAASREAGSGPARQSPVAMETASTGVAGVSSAMDHTFSTTSKDGEGSCYTSLISDICYPPQEDSTYFTGILQKENGHVTISESPEELGTPGPSLPDVPGIESRGLFSSDSGIEMTPAESTEVNKILADPLDQMKAEAYKYIDITRPEEVKHQEQHHPELEDKDLDFKNKDTDISIKPEGVREPDKPAPVEGKIIKDHLLEESTFAPYIDDLSEEQRRAPQITTPVKITLTEIEPSVETTTQEKTPEKQDICLKPSPDTVPTVTVSEPEDDSPGSITPPSSGTEPSAAESQGKGSISEDELITAIKEAKGLSYETAENPRPVGQLADRPEVKARSGPPTIPSPLDHEASSAESGDSEIELVSEDPMAAEDALPSGYVSFGHVGGPPPSPASPSIQYSILREEREAELDSELIIESCDASSASEESPKREQDSPPMKPSALDAIREETGVRAEERAPSRRGLAEPGSFLDYPSTEPQPGPELPPGDGALEPETPMLPRKPEEDSSSNQSPAATKGPGPLGPGAPPPLLFLNKQKAIDLLYWRDIKQTGIVFGSFLLLLFSLTQFSVVSVVAYLALAALSATISFRIYKSVLQAVQKTDEGHPFKAYLELEITLSQEQIQKYTDCLQFYVNSTLKELRRLFLVQDLVDSLKFAVLMWLLTYVGALFNGLTLLLMAVVSMFTLPVVYVKHQAQIDQYLGLVRTHINAVVAKIQAKIPGAKRHAE</sequence>
<feature type="chain" id="PRO_0000168158" description="Reticulon-1">
    <location>
        <begin position="1"/>
        <end position="776"/>
    </location>
</feature>
<feature type="transmembrane region" description="Helical" evidence="3">
    <location>
        <begin position="603"/>
        <end position="623"/>
    </location>
</feature>
<feature type="transmembrane region" description="Helical" evidence="3">
    <location>
        <begin position="705"/>
        <end position="725"/>
    </location>
</feature>
<feature type="domain" description="Reticulon" evidence="4">
    <location>
        <begin position="589"/>
        <end position="776"/>
    </location>
</feature>
<feature type="region of interest" description="Disordered" evidence="5">
    <location>
        <begin position="1"/>
        <end position="101"/>
    </location>
</feature>
<feature type="region of interest" description="Disordered" evidence="5">
    <location>
        <begin position="137"/>
        <end position="168"/>
    </location>
</feature>
<feature type="region of interest" description="Disordered" evidence="5">
    <location>
        <begin position="205"/>
        <end position="245"/>
    </location>
</feature>
<feature type="region of interest" description="Disordered" evidence="5">
    <location>
        <begin position="285"/>
        <end position="580"/>
    </location>
</feature>
<feature type="compositionally biased region" description="Low complexity" evidence="5">
    <location>
        <begin position="328"/>
        <end position="341"/>
    </location>
</feature>
<feature type="compositionally biased region" description="Basic and acidic residues" evidence="5">
    <location>
        <begin position="497"/>
        <end position="511"/>
    </location>
</feature>
<feature type="modified residue" description="Phosphoserine" evidence="1">
    <location>
        <position position="327"/>
    </location>
</feature>
<feature type="modified residue" description="Phosphoserine" evidence="2">
    <location>
        <position position="350"/>
    </location>
</feature>
<feature type="modified residue" description="Phosphoserine" evidence="2">
    <location>
        <position position="352"/>
    </location>
</feature>
<feature type="modified residue" description="Phosphoserine" evidence="13 14">
    <location>
        <position position="487"/>
    </location>
</feature>
<feature type="splice variant" id="VSP_005645" description="In isoform RTN1-C." evidence="11 12">
    <location>
        <begin position="1"/>
        <end position="568"/>
    </location>
</feature>
<feature type="splice variant" id="VSP_005644" description="In isoform RTN1-B." evidence="12">
    <location>
        <begin position="1"/>
        <end position="420"/>
    </location>
</feature>
<feature type="splice variant" id="VSP_005646" description="In isoform RTN1-C." evidence="11 12">
    <original>GPGPLGPGAPPPLLFLNKQK</original>
    <variation>MQATADSTKMDCVWSNWKSQ</variation>
    <location>
        <begin position="569"/>
        <end position="588"/>
    </location>
</feature>
<feature type="sequence variant" id="VAR_053630" description="In dbSNP:rs35645652.">
    <original>G</original>
    <variation>E</variation>
    <location>
        <position position="247"/>
    </location>
</feature>
<feature type="sequence variant" id="VAR_053631" description="In dbSNP:rs35707243.">
    <original>I</original>
    <variation>V</variation>
    <location>
        <position position="357"/>
    </location>
</feature>
<evidence type="ECO:0000250" key="1">
    <source>
        <dbReference type="UniProtKB" id="Q64548"/>
    </source>
</evidence>
<evidence type="ECO:0000250" key="2">
    <source>
        <dbReference type="UniProtKB" id="Q8K0T0"/>
    </source>
</evidence>
<evidence type="ECO:0000255" key="3"/>
<evidence type="ECO:0000255" key="4">
    <source>
        <dbReference type="PROSITE-ProRule" id="PRU00170"/>
    </source>
</evidence>
<evidence type="ECO:0000256" key="5">
    <source>
        <dbReference type="SAM" id="MobiDB-lite"/>
    </source>
</evidence>
<evidence type="ECO:0000269" key="6">
    <source>
    </source>
</evidence>
<evidence type="ECO:0000269" key="7">
    <source>
    </source>
</evidence>
<evidence type="ECO:0000269" key="8">
    <source>
    </source>
</evidence>
<evidence type="ECO:0000269" key="9">
    <source>
    </source>
</evidence>
<evidence type="ECO:0000269" key="10">
    <source>
    </source>
</evidence>
<evidence type="ECO:0000303" key="11">
    <source>
    </source>
</evidence>
<evidence type="ECO:0000303" key="12">
    <source>
    </source>
</evidence>
<evidence type="ECO:0007744" key="13">
    <source>
    </source>
</evidence>
<evidence type="ECO:0007744" key="14">
    <source>
    </source>
</evidence>
<protein>
    <recommendedName>
        <fullName>Reticulon-1</fullName>
    </recommendedName>
    <alternativeName>
        <fullName>Neuroendocrine-specific protein</fullName>
    </alternativeName>
</protein>